<feature type="chain" id="PRO_0000050257" description="Lactose phosphotransferase system repressor">
    <location>
        <begin position="1"/>
        <end position="251"/>
    </location>
</feature>
<feature type="domain" description="HTH deoR-type" evidence="2">
    <location>
        <begin position="3"/>
        <end position="58"/>
    </location>
</feature>
<feature type="DNA-binding region" description="H-T-H motif" evidence="2">
    <location>
        <begin position="20"/>
        <end position="39"/>
    </location>
</feature>
<name>LACR_STAAC</name>
<keyword id="KW-0238">DNA-binding</keyword>
<keyword id="KW-0423">Lactose metabolism</keyword>
<keyword id="KW-0678">Repressor</keyword>
<keyword id="KW-0804">Transcription</keyword>
<keyword id="KW-0805">Transcription regulation</keyword>
<sequence>MNKHERLDEIAKLVNKKGTIRTNEIVEGLNVSDMTVRRDLIELENKGILTKIHGGARSNSTFQYKEISHKEKHTRQIAEKRFIAKKAASLIEDGDTLFFGPGTTVELLAEEVNHHTLTIITNCLPVYKILLEKQTAHFRVYLIGGEMRHITEAFVGEMANAMLEKLRFSKMFFSSNAVNKGAVMTSTLDEAYTQQLALSNSIEKYLLIDHTKVGKEDFTSFCQLNELTAVVMDYEDEEKVETIKTYIEVVD</sequence>
<reference key="1">
    <citation type="journal article" date="2005" name="J. Bacteriol.">
        <title>Insights on evolution of virulence and resistance from the complete genome analysis of an early methicillin-resistant Staphylococcus aureus strain and a biofilm-producing methicillin-resistant Staphylococcus epidermidis strain.</title>
        <authorList>
            <person name="Gill S.R."/>
            <person name="Fouts D.E."/>
            <person name="Archer G.L."/>
            <person name="Mongodin E.F."/>
            <person name="DeBoy R.T."/>
            <person name="Ravel J."/>
            <person name="Paulsen I.T."/>
            <person name="Kolonay J.F."/>
            <person name="Brinkac L.M."/>
            <person name="Beanan M.J."/>
            <person name="Dodson R.J."/>
            <person name="Daugherty S.C."/>
            <person name="Madupu R."/>
            <person name="Angiuoli S.V."/>
            <person name="Durkin A.S."/>
            <person name="Haft D.H."/>
            <person name="Vamathevan J.J."/>
            <person name="Khouri H."/>
            <person name="Utterback T.R."/>
            <person name="Lee C."/>
            <person name="Dimitrov G."/>
            <person name="Jiang L."/>
            <person name="Qin H."/>
            <person name="Weidman J."/>
            <person name="Tran K."/>
            <person name="Kang K.H."/>
            <person name="Hance I.R."/>
            <person name="Nelson K.E."/>
            <person name="Fraser C.M."/>
        </authorList>
    </citation>
    <scope>NUCLEOTIDE SEQUENCE [LARGE SCALE GENOMIC DNA]</scope>
    <source>
        <strain>COL</strain>
    </source>
</reference>
<evidence type="ECO:0000250" key="1"/>
<evidence type="ECO:0000255" key="2">
    <source>
        <dbReference type="PROSITE-ProRule" id="PRU00349"/>
    </source>
</evidence>
<gene>
    <name type="primary">lacR</name>
    <name type="ordered locus">SACOL2188</name>
</gene>
<dbReference type="EMBL" id="CP000046">
    <property type="protein sequence ID" value="AAW37064.1"/>
    <property type="molecule type" value="Genomic_DNA"/>
</dbReference>
<dbReference type="RefSeq" id="WP_001032739.1">
    <property type="nucleotide sequence ID" value="NZ_JBGOFO010000004.1"/>
</dbReference>
<dbReference type="SMR" id="Q5HE08"/>
<dbReference type="KEGG" id="sac:SACOL2188"/>
<dbReference type="HOGENOM" id="CLU_060699_1_0_9"/>
<dbReference type="Proteomes" id="UP000000530">
    <property type="component" value="Chromosome"/>
</dbReference>
<dbReference type="GO" id="GO:0003677">
    <property type="term" value="F:DNA binding"/>
    <property type="evidence" value="ECO:0007669"/>
    <property type="project" value="UniProtKB-KW"/>
</dbReference>
<dbReference type="GO" id="GO:0003700">
    <property type="term" value="F:DNA-binding transcription factor activity"/>
    <property type="evidence" value="ECO:0007669"/>
    <property type="project" value="InterPro"/>
</dbReference>
<dbReference type="GO" id="GO:0005988">
    <property type="term" value="P:lactose metabolic process"/>
    <property type="evidence" value="ECO:0007669"/>
    <property type="project" value="UniProtKB-KW"/>
</dbReference>
<dbReference type="Gene3D" id="3.40.50.1360">
    <property type="match status" value="1"/>
</dbReference>
<dbReference type="Gene3D" id="1.10.10.10">
    <property type="entry name" value="Winged helix-like DNA-binding domain superfamily/Winged helix DNA-binding domain"/>
    <property type="match status" value="1"/>
</dbReference>
<dbReference type="InterPro" id="IPR050313">
    <property type="entry name" value="Carb_Metab_HTH_regulators"/>
</dbReference>
<dbReference type="InterPro" id="IPR014036">
    <property type="entry name" value="DeoR-like_C"/>
</dbReference>
<dbReference type="InterPro" id="IPR001034">
    <property type="entry name" value="DeoR_HTH"/>
</dbReference>
<dbReference type="InterPro" id="IPR037171">
    <property type="entry name" value="NagB/RpiA_transferase-like"/>
</dbReference>
<dbReference type="InterPro" id="IPR018356">
    <property type="entry name" value="Tscrpt_reg_HTH_DeoR_CS"/>
</dbReference>
<dbReference type="InterPro" id="IPR036388">
    <property type="entry name" value="WH-like_DNA-bd_sf"/>
</dbReference>
<dbReference type="InterPro" id="IPR036390">
    <property type="entry name" value="WH_DNA-bd_sf"/>
</dbReference>
<dbReference type="PANTHER" id="PTHR30363:SF4">
    <property type="entry name" value="GLYCEROL-3-PHOSPHATE REGULON REPRESSOR"/>
    <property type="match status" value="1"/>
</dbReference>
<dbReference type="PANTHER" id="PTHR30363">
    <property type="entry name" value="HTH-TYPE TRANSCRIPTIONAL REGULATOR SRLR-RELATED"/>
    <property type="match status" value="1"/>
</dbReference>
<dbReference type="Pfam" id="PF00455">
    <property type="entry name" value="DeoRC"/>
    <property type="match status" value="1"/>
</dbReference>
<dbReference type="Pfam" id="PF08220">
    <property type="entry name" value="HTH_DeoR"/>
    <property type="match status" value="1"/>
</dbReference>
<dbReference type="PRINTS" id="PR00037">
    <property type="entry name" value="HTHLACR"/>
</dbReference>
<dbReference type="SMART" id="SM01134">
    <property type="entry name" value="DeoRC"/>
    <property type="match status" value="1"/>
</dbReference>
<dbReference type="SMART" id="SM00420">
    <property type="entry name" value="HTH_DEOR"/>
    <property type="match status" value="1"/>
</dbReference>
<dbReference type="SUPFAM" id="SSF100950">
    <property type="entry name" value="NagB/RpiA/CoA transferase-like"/>
    <property type="match status" value="1"/>
</dbReference>
<dbReference type="SUPFAM" id="SSF46785">
    <property type="entry name" value="Winged helix' DNA-binding domain"/>
    <property type="match status" value="1"/>
</dbReference>
<dbReference type="PROSITE" id="PS00894">
    <property type="entry name" value="HTH_DEOR_1"/>
    <property type="match status" value="1"/>
</dbReference>
<dbReference type="PROSITE" id="PS51000">
    <property type="entry name" value="HTH_DEOR_2"/>
    <property type="match status" value="1"/>
</dbReference>
<comment type="function">
    <text evidence="1">Repressor of the lactose catabolism operon. Galactose-6-phosphate is the inducer (By similarity).</text>
</comment>
<organism>
    <name type="scientific">Staphylococcus aureus (strain COL)</name>
    <dbReference type="NCBI Taxonomy" id="93062"/>
    <lineage>
        <taxon>Bacteria</taxon>
        <taxon>Bacillati</taxon>
        <taxon>Bacillota</taxon>
        <taxon>Bacilli</taxon>
        <taxon>Bacillales</taxon>
        <taxon>Staphylococcaceae</taxon>
        <taxon>Staphylococcus</taxon>
    </lineage>
</organism>
<accession>Q5HE08</accession>
<protein>
    <recommendedName>
        <fullName>Lactose phosphotransferase system repressor</fullName>
    </recommendedName>
</protein>
<proteinExistence type="inferred from homology"/>